<name>RPOH_HAEIN</name>
<gene>
    <name evidence="1" type="primary">rpoH</name>
    <name type="ordered locus">HI_0269</name>
</gene>
<accession>P44404</accession>
<evidence type="ECO:0000255" key="1">
    <source>
        <dbReference type="HAMAP-Rule" id="MF_00961"/>
    </source>
</evidence>
<proteinExistence type="inferred from homology"/>
<feature type="chain" id="PRO_0000093960" description="RNA polymerase sigma factor RpoH">
    <location>
        <begin position="1"/>
        <end position="281"/>
    </location>
</feature>
<feature type="DNA-binding region" description="H-T-H motif" evidence="1">
    <location>
        <begin position="250"/>
        <end position="269"/>
    </location>
</feature>
<feature type="region of interest" description="Sigma-70 factor domain-2" evidence="1">
    <location>
        <begin position="52"/>
        <end position="121"/>
    </location>
</feature>
<feature type="region of interest" description="Sigma-70 factor domain-4" evidence="1">
    <location>
        <begin position="226"/>
        <end position="277"/>
    </location>
</feature>
<feature type="short sequence motif" description="Interaction with polymerase core subunit RpoC">
    <location>
        <begin position="76"/>
        <end position="79"/>
    </location>
</feature>
<organism>
    <name type="scientific">Haemophilus influenzae (strain ATCC 51907 / DSM 11121 / KW20 / Rd)</name>
    <dbReference type="NCBI Taxonomy" id="71421"/>
    <lineage>
        <taxon>Bacteria</taxon>
        <taxon>Pseudomonadati</taxon>
        <taxon>Pseudomonadota</taxon>
        <taxon>Gammaproteobacteria</taxon>
        <taxon>Pasteurellales</taxon>
        <taxon>Pasteurellaceae</taxon>
        <taxon>Haemophilus</taxon>
    </lineage>
</organism>
<keyword id="KW-0963">Cytoplasm</keyword>
<keyword id="KW-0238">DNA-binding</keyword>
<keyword id="KW-1185">Reference proteome</keyword>
<keyword id="KW-0731">Sigma factor</keyword>
<keyword id="KW-0346">Stress response</keyword>
<keyword id="KW-0804">Transcription</keyword>
<keyword id="KW-0805">Transcription regulation</keyword>
<comment type="function">
    <text evidence="1">Sigma factors are initiation factors that promote the attachment of RNA polymerase to specific initiation sites and are then released. This sigma factor is involved in regulation of expression of heat shock genes.</text>
</comment>
<comment type="subunit">
    <text evidence="1">Interacts with the RNA polymerase core enzyme.</text>
</comment>
<comment type="subcellular location">
    <subcellularLocation>
        <location evidence="1">Cytoplasm</location>
    </subcellularLocation>
</comment>
<comment type="similarity">
    <text evidence="1">Belongs to the sigma-70 factor family. RpoH subfamily.</text>
</comment>
<sequence>MDKETQMMLVPQGSIEGYIRAANEYPMLTAEEEKELAERLYYHEDLDAAKKLILSHLRFVIHVARGYSGYGLPQADLIQEGNIGLMKAVKRFNPEVGVRLVSFAVHWIKAEIHEYVLRNWRIVKVATTKAQRKLFFNLRKTKQRLGWFNENEVDMVANELGVSKEDVIEMESRMSGADVGFDLPTDDAETETYSPALYLEDKSSNFAAELENENFESQATEQLGAALQSLDARSQDIIKARWLDDNKATLHDLAAKYNVSAERIRQLETNALKKLKSAVNF</sequence>
<protein>
    <recommendedName>
        <fullName evidence="1">RNA polymerase sigma factor RpoH</fullName>
    </recommendedName>
    <alternativeName>
        <fullName evidence="1">RNA polymerase sigma-32 factor</fullName>
    </alternativeName>
</protein>
<dbReference type="EMBL" id="L42023">
    <property type="protein sequence ID" value="AAC21935.1"/>
    <property type="molecule type" value="Genomic_DNA"/>
</dbReference>
<dbReference type="PIR" id="H64058">
    <property type="entry name" value="H64058"/>
</dbReference>
<dbReference type="RefSeq" id="NP_438438.1">
    <property type="nucleotide sequence ID" value="NC_000907.1"/>
</dbReference>
<dbReference type="SMR" id="P44404"/>
<dbReference type="STRING" id="71421.HI_0269"/>
<dbReference type="EnsemblBacteria" id="AAC21935">
    <property type="protein sequence ID" value="AAC21935"/>
    <property type="gene ID" value="HI_0269"/>
</dbReference>
<dbReference type="KEGG" id="hin:HI_0269"/>
<dbReference type="PATRIC" id="fig|71421.8.peg.284"/>
<dbReference type="eggNOG" id="COG0568">
    <property type="taxonomic scope" value="Bacteria"/>
</dbReference>
<dbReference type="HOGENOM" id="CLU_014793_3_5_6"/>
<dbReference type="OrthoDB" id="9809557at2"/>
<dbReference type="PhylomeDB" id="P44404"/>
<dbReference type="BioCyc" id="HINF71421:G1GJ1-284-MONOMER"/>
<dbReference type="Proteomes" id="UP000000579">
    <property type="component" value="Chromosome"/>
</dbReference>
<dbReference type="GO" id="GO:0005737">
    <property type="term" value="C:cytoplasm"/>
    <property type="evidence" value="ECO:0007669"/>
    <property type="project" value="UniProtKB-SubCell"/>
</dbReference>
<dbReference type="GO" id="GO:0003677">
    <property type="term" value="F:DNA binding"/>
    <property type="evidence" value="ECO:0007669"/>
    <property type="project" value="UniProtKB-UniRule"/>
</dbReference>
<dbReference type="GO" id="GO:0016987">
    <property type="term" value="F:sigma factor activity"/>
    <property type="evidence" value="ECO:0007669"/>
    <property type="project" value="UniProtKB-UniRule"/>
</dbReference>
<dbReference type="GO" id="GO:0006352">
    <property type="term" value="P:DNA-templated transcription initiation"/>
    <property type="evidence" value="ECO:0007669"/>
    <property type="project" value="UniProtKB-UniRule"/>
</dbReference>
<dbReference type="GO" id="GO:0009408">
    <property type="term" value="P:response to heat"/>
    <property type="evidence" value="ECO:0007669"/>
    <property type="project" value="UniProtKB-UniRule"/>
</dbReference>
<dbReference type="FunFam" id="1.10.10.10:FF:000285">
    <property type="entry name" value="RNA polymerase sigma factor RpoH"/>
    <property type="match status" value="1"/>
</dbReference>
<dbReference type="FunFam" id="1.20.120.1810:FF:000001">
    <property type="entry name" value="RNA polymerase sigma factor RpoH"/>
    <property type="match status" value="1"/>
</dbReference>
<dbReference type="FunFam" id="1.20.140.160:FF:000002">
    <property type="entry name" value="RNA polymerase sigma factor RpoH"/>
    <property type="match status" value="1"/>
</dbReference>
<dbReference type="Gene3D" id="1.20.120.1810">
    <property type="match status" value="1"/>
</dbReference>
<dbReference type="Gene3D" id="1.20.140.160">
    <property type="match status" value="1"/>
</dbReference>
<dbReference type="HAMAP" id="MF_00961">
    <property type="entry name" value="Sigma70_RpoH"/>
    <property type="match status" value="1"/>
</dbReference>
<dbReference type="InterPro" id="IPR014284">
    <property type="entry name" value="RNA_pol_sigma-70_dom"/>
</dbReference>
<dbReference type="InterPro" id="IPR000943">
    <property type="entry name" value="RNA_pol_sigma70"/>
</dbReference>
<dbReference type="InterPro" id="IPR009042">
    <property type="entry name" value="RNA_pol_sigma70_r1_2"/>
</dbReference>
<dbReference type="InterPro" id="IPR007627">
    <property type="entry name" value="RNA_pol_sigma70_r2"/>
</dbReference>
<dbReference type="InterPro" id="IPR007630">
    <property type="entry name" value="RNA_pol_sigma70_r4"/>
</dbReference>
<dbReference type="InterPro" id="IPR013325">
    <property type="entry name" value="RNA_pol_sigma_r2"/>
</dbReference>
<dbReference type="InterPro" id="IPR013324">
    <property type="entry name" value="RNA_pol_sigma_r3/r4-like"/>
</dbReference>
<dbReference type="InterPro" id="IPR012759">
    <property type="entry name" value="RNA_pol_sigma_RpoH_proteobac"/>
</dbReference>
<dbReference type="InterPro" id="IPR050813">
    <property type="entry name" value="Sigma-70_Factor"/>
</dbReference>
<dbReference type="NCBIfam" id="NF005143">
    <property type="entry name" value="PRK06596.1"/>
    <property type="match status" value="1"/>
</dbReference>
<dbReference type="NCBIfam" id="TIGR02392">
    <property type="entry name" value="rpoH_proteo"/>
    <property type="match status" value="1"/>
</dbReference>
<dbReference type="NCBIfam" id="TIGR02937">
    <property type="entry name" value="sigma70-ECF"/>
    <property type="match status" value="1"/>
</dbReference>
<dbReference type="PANTHER" id="PTHR30376:SF3">
    <property type="entry name" value="RNA POLYMERASE SIGMA FACTOR RPOH"/>
    <property type="match status" value="1"/>
</dbReference>
<dbReference type="PANTHER" id="PTHR30376">
    <property type="entry name" value="SIGMA FACTOR RPOH HEAT SHOCK RELATED"/>
    <property type="match status" value="1"/>
</dbReference>
<dbReference type="Pfam" id="PF00140">
    <property type="entry name" value="Sigma70_r1_2"/>
    <property type="match status" value="1"/>
</dbReference>
<dbReference type="Pfam" id="PF04542">
    <property type="entry name" value="Sigma70_r2"/>
    <property type="match status" value="1"/>
</dbReference>
<dbReference type="Pfam" id="PF04545">
    <property type="entry name" value="Sigma70_r4"/>
    <property type="match status" value="1"/>
</dbReference>
<dbReference type="PRINTS" id="PR00046">
    <property type="entry name" value="SIGMA70FCT"/>
</dbReference>
<dbReference type="SUPFAM" id="SSF88946">
    <property type="entry name" value="Sigma2 domain of RNA polymerase sigma factors"/>
    <property type="match status" value="1"/>
</dbReference>
<dbReference type="SUPFAM" id="SSF88659">
    <property type="entry name" value="Sigma3 and sigma4 domains of RNA polymerase sigma factors"/>
    <property type="match status" value="1"/>
</dbReference>
<dbReference type="PROSITE" id="PS00715">
    <property type="entry name" value="SIGMA70_1"/>
    <property type="match status" value="1"/>
</dbReference>
<dbReference type="PROSITE" id="PS00716">
    <property type="entry name" value="SIGMA70_2"/>
    <property type="match status" value="1"/>
</dbReference>
<reference key="1">
    <citation type="journal article" date="1995" name="Science">
        <title>Whole-genome random sequencing and assembly of Haemophilus influenzae Rd.</title>
        <authorList>
            <person name="Fleischmann R.D."/>
            <person name="Adams M.D."/>
            <person name="White O."/>
            <person name="Clayton R.A."/>
            <person name="Kirkness E.F."/>
            <person name="Kerlavage A.R."/>
            <person name="Bult C.J."/>
            <person name="Tomb J.-F."/>
            <person name="Dougherty B.A."/>
            <person name="Merrick J.M."/>
            <person name="McKenney K."/>
            <person name="Sutton G.G."/>
            <person name="FitzHugh W."/>
            <person name="Fields C.A."/>
            <person name="Gocayne J.D."/>
            <person name="Scott J.D."/>
            <person name="Shirley R."/>
            <person name="Liu L.-I."/>
            <person name="Glodek A."/>
            <person name="Kelley J.M."/>
            <person name="Weidman J.F."/>
            <person name="Phillips C.A."/>
            <person name="Spriggs T."/>
            <person name="Hedblom E."/>
            <person name="Cotton M.D."/>
            <person name="Utterback T.R."/>
            <person name="Hanna M.C."/>
            <person name="Nguyen D.T."/>
            <person name="Saudek D.M."/>
            <person name="Brandon R.C."/>
            <person name="Fine L.D."/>
            <person name="Fritchman J.L."/>
            <person name="Fuhrmann J.L."/>
            <person name="Geoghagen N.S.M."/>
            <person name="Gnehm C.L."/>
            <person name="McDonald L.A."/>
            <person name="Small K.V."/>
            <person name="Fraser C.M."/>
            <person name="Smith H.O."/>
            <person name="Venter J.C."/>
        </authorList>
    </citation>
    <scope>NUCLEOTIDE SEQUENCE [LARGE SCALE GENOMIC DNA]</scope>
    <source>
        <strain>ATCC 51907 / DSM 11121 / KW20 / Rd</strain>
    </source>
</reference>